<gene>
    <name evidence="1" type="primary">rsmH</name>
    <name type="synonym">mraW</name>
    <name type="ordered locus">SARI_02882</name>
</gene>
<sequence>MMENFKHTTVLLDEAVNGLNIRPDGIYIDGTFGRGGHSRLILSQLGEEGRLLAIDRDPQAIAVAQAINDPRFSIIHGPFSALADYVAERELTGKIDGILLDLGVSSPQLDDAERGFSFMRDGPLDMRMDPTRGQSAAEWLQTAEEADIAWVLKTFGEERFAKRIARAIVERNREQPMTRTKELAEVVAAATPVKDKFKHPATRTFQAVRIWVNSELEEIEQALKSSLSVLAPGGRLSIISFHSLEDRIVKRFMREQSRGPQVPAGLPMTEAQLKKLGGRELRVLGKLMPGEKEVAENPRARSSVLRIAERTNA</sequence>
<evidence type="ECO:0000255" key="1">
    <source>
        <dbReference type="HAMAP-Rule" id="MF_01007"/>
    </source>
</evidence>
<dbReference type="EC" id="2.1.1.199" evidence="1"/>
<dbReference type="EMBL" id="CP000880">
    <property type="protein sequence ID" value="ABX22729.1"/>
    <property type="molecule type" value="Genomic_DNA"/>
</dbReference>
<dbReference type="SMR" id="A9MQD1"/>
<dbReference type="STRING" id="41514.SARI_02882"/>
<dbReference type="KEGG" id="ses:SARI_02882"/>
<dbReference type="HOGENOM" id="CLU_038422_2_0_6"/>
<dbReference type="Proteomes" id="UP000002084">
    <property type="component" value="Chromosome"/>
</dbReference>
<dbReference type="GO" id="GO:0005737">
    <property type="term" value="C:cytoplasm"/>
    <property type="evidence" value="ECO:0007669"/>
    <property type="project" value="UniProtKB-SubCell"/>
</dbReference>
<dbReference type="GO" id="GO:0071424">
    <property type="term" value="F:rRNA (cytosine-N4-)-methyltransferase activity"/>
    <property type="evidence" value="ECO:0007669"/>
    <property type="project" value="UniProtKB-UniRule"/>
</dbReference>
<dbReference type="GO" id="GO:0070475">
    <property type="term" value="P:rRNA base methylation"/>
    <property type="evidence" value="ECO:0007669"/>
    <property type="project" value="UniProtKB-UniRule"/>
</dbReference>
<dbReference type="FunFam" id="1.10.150.170:FF:000001">
    <property type="entry name" value="Ribosomal RNA small subunit methyltransferase H"/>
    <property type="match status" value="1"/>
</dbReference>
<dbReference type="Gene3D" id="1.10.150.170">
    <property type="entry name" value="Putative methyltransferase TM0872, insert domain"/>
    <property type="match status" value="1"/>
</dbReference>
<dbReference type="Gene3D" id="3.40.50.150">
    <property type="entry name" value="Vaccinia Virus protein VP39"/>
    <property type="match status" value="1"/>
</dbReference>
<dbReference type="HAMAP" id="MF_01007">
    <property type="entry name" value="16SrRNA_methyltr_H"/>
    <property type="match status" value="1"/>
</dbReference>
<dbReference type="InterPro" id="IPR002903">
    <property type="entry name" value="RsmH"/>
</dbReference>
<dbReference type="InterPro" id="IPR023397">
    <property type="entry name" value="SAM-dep_MeTrfase_MraW_recog"/>
</dbReference>
<dbReference type="InterPro" id="IPR029063">
    <property type="entry name" value="SAM-dependent_MTases_sf"/>
</dbReference>
<dbReference type="NCBIfam" id="TIGR00006">
    <property type="entry name" value="16S rRNA (cytosine(1402)-N(4))-methyltransferase RsmH"/>
    <property type="match status" value="1"/>
</dbReference>
<dbReference type="PANTHER" id="PTHR11265:SF0">
    <property type="entry name" value="12S RRNA N4-METHYLCYTIDINE METHYLTRANSFERASE"/>
    <property type="match status" value="1"/>
</dbReference>
<dbReference type="PANTHER" id="PTHR11265">
    <property type="entry name" value="S-ADENOSYL-METHYLTRANSFERASE MRAW"/>
    <property type="match status" value="1"/>
</dbReference>
<dbReference type="Pfam" id="PF01795">
    <property type="entry name" value="Methyltransf_5"/>
    <property type="match status" value="1"/>
</dbReference>
<dbReference type="PIRSF" id="PIRSF004486">
    <property type="entry name" value="MraW"/>
    <property type="match status" value="1"/>
</dbReference>
<dbReference type="SUPFAM" id="SSF81799">
    <property type="entry name" value="Putative methyltransferase TM0872, insert domain"/>
    <property type="match status" value="1"/>
</dbReference>
<dbReference type="SUPFAM" id="SSF53335">
    <property type="entry name" value="S-adenosyl-L-methionine-dependent methyltransferases"/>
    <property type="match status" value="1"/>
</dbReference>
<accession>A9MQD1</accession>
<feature type="chain" id="PRO_0000387098" description="Ribosomal RNA small subunit methyltransferase H">
    <location>
        <begin position="1"/>
        <end position="313"/>
    </location>
</feature>
<feature type="binding site" evidence="1">
    <location>
        <begin position="35"/>
        <end position="37"/>
    </location>
    <ligand>
        <name>S-adenosyl-L-methionine</name>
        <dbReference type="ChEBI" id="CHEBI:59789"/>
    </ligand>
</feature>
<feature type="binding site" evidence="1">
    <location>
        <position position="55"/>
    </location>
    <ligand>
        <name>S-adenosyl-L-methionine</name>
        <dbReference type="ChEBI" id="CHEBI:59789"/>
    </ligand>
</feature>
<feature type="binding site" evidence="1">
    <location>
        <position position="79"/>
    </location>
    <ligand>
        <name>S-adenosyl-L-methionine</name>
        <dbReference type="ChEBI" id="CHEBI:59789"/>
    </ligand>
</feature>
<feature type="binding site" evidence="1">
    <location>
        <position position="101"/>
    </location>
    <ligand>
        <name>S-adenosyl-L-methionine</name>
        <dbReference type="ChEBI" id="CHEBI:59789"/>
    </ligand>
</feature>
<feature type="binding site" evidence="1">
    <location>
        <position position="108"/>
    </location>
    <ligand>
        <name>S-adenosyl-L-methionine</name>
        <dbReference type="ChEBI" id="CHEBI:59789"/>
    </ligand>
</feature>
<keyword id="KW-0963">Cytoplasm</keyword>
<keyword id="KW-0489">Methyltransferase</keyword>
<keyword id="KW-1185">Reference proteome</keyword>
<keyword id="KW-0698">rRNA processing</keyword>
<keyword id="KW-0949">S-adenosyl-L-methionine</keyword>
<keyword id="KW-0808">Transferase</keyword>
<organism>
    <name type="scientific">Salmonella arizonae (strain ATCC BAA-731 / CDC346-86 / RSK2980)</name>
    <dbReference type="NCBI Taxonomy" id="41514"/>
    <lineage>
        <taxon>Bacteria</taxon>
        <taxon>Pseudomonadati</taxon>
        <taxon>Pseudomonadota</taxon>
        <taxon>Gammaproteobacteria</taxon>
        <taxon>Enterobacterales</taxon>
        <taxon>Enterobacteriaceae</taxon>
        <taxon>Salmonella</taxon>
    </lineage>
</organism>
<name>RSMH_SALAR</name>
<protein>
    <recommendedName>
        <fullName evidence="1">Ribosomal RNA small subunit methyltransferase H</fullName>
        <ecNumber evidence="1">2.1.1.199</ecNumber>
    </recommendedName>
    <alternativeName>
        <fullName evidence="1">16S rRNA m(4)C1402 methyltransferase</fullName>
    </alternativeName>
    <alternativeName>
        <fullName evidence="1">rRNA (cytosine-N(4)-)-methyltransferase RsmH</fullName>
    </alternativeName>
</protein>
<proteinExistence type="inferred from homology"/>
<comment type="function">
    <text evidence="1">Specifically methylates the N4 position of cytidine in position 1402 (C1402) of 16S rRNA.</text>
</comment>
<comment type="catalytic activity">
    <reaction evidence="1">
        <text>cytidine(1402) in 16S rRNA + S-adenosyl-L-methionine = N(4)-methylcytidine(1402) in 16S rRNA + S-adenosyl-L-homocysteine + H(+)</text>
        <dbReference type="Rhea" id="RHEA:42928"/>
        <dbReference type="Rhea" id="RHEA-COMP:10286"/>
        <dbReference type="Rhea" id="RHEA-COMP:10287"/>
        <dbReference type="ChEBI" id="CHEBI:15378"/>
        <dbReference type="ChEBI" id="CHEBI:57856"/>
        <dbReference type="ChEBI" id="CHEBI:59789"/>
        <dbReference type="ChEBI" id="CHEBI:74506"/>
        <dbReference type="ChEBI" id="CHEBI:82748"/>
        <dbReference type="EC" id="2.1.1.199"/>
    </reaction>
</comment>
<comment type="subcellular location">
    <subcellularLocation>
        <location evidence="1">Cytoplasm</location>
    </subcellularLocation>
</comment>
<comment type="similarity">
    <text evidence="1">Belongs to the methyltransferase superfamily. RsmH family.</text>
</comment>
<reference key="1">
    <citation type="submission" date="2007-11" db="EMBL/GenBank/DDBJ databases">
        <authorList>
            <consortium name="The Salmonella enterica serovar Arizonae Genome Sequencing Project"/>
            <person name="McClelland M."/>
            <person name="Sanderson E.K."/>
            <person name="Porwollik S."/>
            <person name="Spieth J."/>
            <person name="Clifton W.S."/>
            <person name="Fulton R."/>
            <person name="Chunyan W."/>
            <person name="Wollam A."/>
            <person name="Shah N."/>
            <person name="Pepin K."/>
            <person name="Bhonagiri V."/>
            <person name="Nash W."/>
            <person name="Johnson M."/>
            <person name="Thiruvilangam P."/>
            <person name="Wilson R."/>
        </authorList>
    </citation>
    <scope>NUCLEOTIDE SEQUENCE [LARGE SCALE GENOMIC DNA]</scope>
    <source>
        <strain>ATCC BAA-731 / CDC346-86 / RSK2980</strain>
    </source>
</reference>